<evidence type="ECO:0000269" key="1">
    <source>
    </source>
</evidence>
<organism>
    <name type="scientific">Mycobacterium tuberculosis (strain CDC 1551 / Oshkosh)</name>
    <dbReference type="NCBI Taxonomy" id="83331"/>
    <lineage>
        <taxon>Bacteria</taxon>
        <taxon>Bacillati</taxon>
        <taxon>Actinomycetota</taxon>
        <taxon>Actinomycetes</taxon>
        <taxon>Mycobacteriales</taxon>
        <taxon>Mycobacteriaceae</taxon>
        <taxon>Mycobacterium</taxon>
        <taxon>Mycobacterium tuberculosis complex</taxon>
    </lineage>
</organism>
<keyword id="KW-1185">Reference proteome</keyword>
<sequence>MASSASDGTHERSAFRLSPPVLSGAMGPFMHTGLYVAQSWRDYLGQQPDKLPIARPTIALAAQAFRDEIVLLGLKARRPVSNHRVFERISQEVAAGLEFYGNRGWLEKPSGFFAQPPPLTEVAVRKVKDRRRSFYRIFFDSGFTPHPGEPGSQRWLSYTANNREYALLLRHPEPRPWLVCVHGTEMGRAPLDLAVFRAWKLHDELGLNIVMPVLPMHGPRGQGLPKGAVFPGEDVLDDVHGTAQAVWDIRRLLSWIRSQEEESLIGLNGLSLGGYIASLVASLEEGLACAILGVPVADLIELLGRHCGLRHKDPRRHTVKMAEPIGRMISPLSLTPLVPMPGRFIYAGIADRLVHPREQVTRLWEHWGKPEIVWYPGGHTGFFQSRPVRRFVQAALEQSGLLDAPRTQRDRSA</sequence>
<protein>
    <recommendedName>
        <fullName>Uncharacterized protein MT2702</fullName>
    </recommendedName>
</protein>
<name>Y2627_MYCTO</name>
<comment type="induction">
    <text evidence="1">A member of the dormancy regulon. Induced in response to reduced oxygen tension (hypoxia) and low levels of nitric oxide (NO).</text>
</comment>
<accession>P9WL66</accession>
<accession>L0TA72</accession>
<accession>O06185</accession>
<accession>Q7D6V3</accession>
<feature type="chain" id="PRO_0000427532" description="Uncharacterized protein MT2702">
    <location>
        <begin position="1"/>
        <end position="413"/>
    </location>
</feature>
<reference key="1">
    <citation type="journal article" date="2002" name="J. Bacteriol.">
        <title>Whole-genome comparison of Mycobacterium tuberculosis clinical and laboratory strains.</title>
        <authorList>
            <person name="Fleischmann R.D."/>
            <person name="Alland D."/>
            <person name="Eisen J.A."/>
            <person name="Carpenter L."/>
            <person name="White O."/>
            <person name="Peterson J.D."/>
            <person name="DeBoy R.T."/>
            <person name="Dodson R.J."/>
            <person name="Gwinn M.L."/>
            <person name="Haft D.H."/>
            <person name="Hickey E.K."/>
            <person name="Kolonay J.F."/>
            <person name="Nelson W.C."/>
            <person name="Umayam L.A."/>
            <person name="Ermolaeva M.D."/>
            <person name="Salzberg S.L."/>
            <person name="Delcher A."/>
            <person name="Utterback T.R."/>
            <person name="Weidman J.F."/>
            <person name="Khouri H.M."/>
            <person name="Gill J."/>
            <person name="Mikula A."/>
            <person name="Bishai W."/>
            <person name="Jacobs W.R. Jr."/>
            <person name="Venter J.C."/>
            <person name="Fraser C.M."/>
        </authorList>
    </citation>
    <scope>NUCLEOTIDE SEQUENCE [LARGE SCALE GENOMIC DNA]</scope>
    <source>
        <strain>CDC 1551 / Oshkosh</strain>
    </source>
</reference>
<reference key="2">
    <citation type="journal article" date="2003" name="J. Exp. Med.">
        <title>Inhibition of respiration by nitric oxide induces a Mycobacterium tuberculosis dormancy program.</title>
        <authorList>
            <person name="Voskuil M.I."/>
            <person name="Schnappinger D."/>
            <person name="Visconti K.C."/>
            <person name="Harrell M.I."/>
            <person name="Dolganov G.M."/>
            <person name="Sherman D.R."/>
            <person name="Schoolnik G.K."/>
        </authorList>
    </citation>
    <scope>INDUCTION BY NITRIC OXIDE (NO) AND BY HYPOXIA</scope>
    <scope>DORMANCY REGULON</scope>
    <source>
        <strain>CDC 1551 / Oshkosh</strain>
    </source>
</reference>
<gene>
    <name type="ordered locus">MT2702</name>
</gene>
<proteinExistence type="evidence at transcript level"/>
<dbReference type="EMBL" id="AE000516">
    <property type="protein sequence ID" value="AAK47018.1"/>
    <property type="molecule type" value="Genomic_DNA"/>
</dbReference>
<dbReference type="PIR" id="B70573">
    <property type="entry name" value="B70573"/>
</dbReference>
<dbReference type="RefSeq" id="WP_003899402.1">
    <property type="nucleotide sequence ID" value="NZ_KK341227.1"/>
</dbReference>
<dbReference type="SMR" id="P9WL66"/>
<dbReference type="ESTHER" id="myctu-RV2627C">
    <property type="family name" value="6_AlphaBeta_hydrolase"/>
</dbReference>
<dbReference type="KEGG" id="mtc:MT2702"/>
<dbReference type="PATRIC" id="fig|83331.31.peg.2913"/>
<dbReference type="HOGENOM" id="CLU_057308_0_0_11"/>
<dbReference type="Proteomes" id="UP000001020">
    <property type="component" value="Chromosome"/>
</dbReference>
<dbReference type="Gene3D" id="3.40.50.1820">
    <property type="entry name" value="alpha/beta hydrolase"/>
    <property type="match status" value="1"/>
</dbReference>
<dbReference type="InterPro" id="IPR029058">
    <property type="entry name" value="AB_hydrolase_fold"/>
</dbReference>
<dbReference type="PANTHER" id="PTHR13617">
    <property type="entry name" value="PROTEIN ABHD18"/>
    <property type="match status" value="1"/>
</dbReference>
<dbReference type="PANTHER" id="PTHR13617:SF14">
    <property type="entry name" value="PROTEIN ABHD18"/>
    <property type="match status" value="1"/>
</dbReference>
<dbReference type="SUPFAM" id="SSF53474">
    <property type="entry name" value="alpha/beta-Hydrolases"/>
    <property type="match status" value="1"/>
</dbReference>